<keyword id="KW-0030">Aminoacyl-tRNA synthetase</keyword>
<keyword id="KW-0067">ATP-binding</keyword>
<keyword id="KW-0963">Cytoplasm</keyword>
<keyword id="KW-0436">Ligase</keyword>
<keyword id="KW-0547">Nucleotide-binding</keyword>
<keyword id="KW-0648">Protein biosynthesis</keyword>
<keyword id="KW-1185">Reference proteome</keyword>
<protein>
    <recommendedName>
        <fullName evidence="1">Serine--tRNA ligase</fullName>
        <ecNumber evidence="1">6.1.1.11</ecNumber>
    </recommendedName>
    <alternativeName>
        <fullName evidence="1">Seryl-tRNA synthetase</fullName>
        <shortName evidence="1">SerRS</shortName>
    </alternativeName>
    <alternativeName>
        <fullName evidence="1">Seryl-tRNA(Ser/Sec) synthetase</fullName>
    </alternativeName>
</protein>
<sequence>MIDLKFLRENPDAVRASQRLRGEDPALVEVLLDADTARRAAISTADTLRAEQKAASKKVGKATPEERPALLAAASELAAQVKSAEAEQVVTEAAFTEAHKAISNVVIDGVPAGGEQDFALRELVGEPHPIENPKDHVELGESLGLFDMERGAKVSGARFYFLTGYGALLQLGLLQLAVQTAVANGFTLLIPPVLVKPEIMGGTGFLGAHADEVYHLEEDDLYLVGTSEVPIAGYHSGEILDLNNGPLRYAGWSSCFRREAGSYGKDTRGIIRVHQFDKVEAFVYCKPEDAEAEHEKILGWERQMLGHIEVPYRVIDVAAGDLGSSAARKFDCEAWVPTQRAYRELTSTSNCTTFQARRLAVRYRDESGKPQIAATLNGTLATTRWLVAILENHQQPDGSVRVPTALVPFVGTEVLEPK</sequence>
<gene>
    <name evidence="1" type="primary">serS</name>
    <name type="ordered locus">MAB_0153</name>
</gene>
<reference key="1">
    <citation type="journal article" date="2009" name="PLoS ONE">
        <title>Non mycobacterial virulence genes in the genome of the emerging pathogen Mycobacterium abscessus.</title>
        <authorList>
            <person name="Ripoll F."/>
            <person name="Pasek S."/>
            <person name="Schenowitz C."/>
            <person name="Dossat C."/>
            <person name="Barbe V."/>
            <person name="Rottman M."/>
            <person name="Macheras E."/>
            <person name="Heym B."/>
            <person name="Herrmann J.L."/>
            <person name="Daffe M."/>
            <person name="Brosch R."/>
            <person name="Risler J.L."/>
            <person name="Gaillard J.L."/>
        </authorList>
    </citation>
    <scope>NUCLEOTIDE SEQUENCE [LARGE SCALE GENOMIC DNA]</scope>
    <source>
        <strain>ATCC 19977 / DSM 44196 / CCUG 20993 / CIP 104536 / JCM 13569 / NCTC 13031 / TMC 1543 / L948</strain>
    </source>
</reference>
<accession>B1MEI9</accession>
<feature type="chain" id="PRO_1000098096" description="Serine--tRNA ligase">
    <location>
        <begin position="1"/>
        <end position="418"/>
    </location>
</feature>
<feature type="binding site" evidence="1">
    <location>
        <begin position="226"/>
        <end position="228"/>
    </location>
    <ligand>
        <name>L-serine</name>
        <dbReference type="ChEBI" id="CHEBI:33384"/>
    </ligand>
</feature>
<feature type="binding site" evidence="1">
    <location>
        <begin position="257"/>
        <end position="259"/>
    </location>
    <ligand>
        <name>ATP</name>
        <dbReference type="ChEBI" id="CHEBI:30616"/>
    </ligand>
</feature>
<feature type="binding site" evidence="1">
    <location>
        <position position="273"/>
    </location>
    <ligand>
        <name>ATP</name>
        <dbReference type="ChEBI" id="CHEBI:30616"/>
    </ligand>
</feature>
<feature type="binding site" evidence="1">
    <location>
        <position position="280"/>
    </location>
    <ligand>
        <name>L-serine</name>
        <dbReference type="ChEBI" id="CHEBI:33384"/>
    </ligand>
</feature>
<feature type="binding site" evidence="1">
    <location>
        <begin position="344"/>
        <end position="347"/>
    </location>
    <ligand>
        <name>ATP</name>
        <dbReference type="ChEBI" id="CHEBI:30616"/>
    </ligand>
</feature>
<feature type="binding site" evidence="1">
    <location>
        <position position="379"/>
    </location>
    <ligand>
        <name>L-serine</name>
        <dbReference type="ChEBI" id="CHEBI:33384"/>
    </ligand>
</feature>
<evidence type="ECO:0000255" key="1">
    <source>
        <dbReference type="HAMAP-Rule" id="MF_00176"/>
    </source>
</evidence>
<dbReference type="EC" id="6.1.1.11" evidence="1"/>
<dbReference type="EMBL" id="CU458896">
    <property type="protein sequence ID" value="CAM60253.1"/>
    <property type="molecule type" value="Genomic_DNA"/>
</dbReference>
<dbReference type="RefSeq" id="WP_005084110.1">
    <property type="nucleotide sequence ID" value="NZ_MLCG01000005.1"/>
</dbReference>
<dbReference type="SMR" id="B1MEI9"/>
<dbReference type="GeneID" id="93377097"/>
<dbReference type="KEGG" id="mab:MAB_0153"/>
<dbReference type="UniPathway" id="UPA00906">
    <property type="reaction ID" value="UER00895"/>
</dbReference>
<dbReference type="Proteomes" id="UP000007137">
    <property type="component" value="Chromosome"/>
</dbReference>
<dbReference type="GO" id="GO:0005737">
    <property type="term" value="C:cytoplasm"/>
    <property type="evidence" value="ECO:0007669"/>
    <property type="project" value="UniProtKB-SubCell"/>
</dbReference>
<dbReference type="GO" id="GO:0005524">
    <property type="term" value="F:ATP binding"/>
    <property type="evidence" value="ECO:0007669"/>
    <property type="project" value="UniProtKB-UniRule"/>
</dbReference>
<dbReference type="GO" id="GO:0004828">
    <property type="term" value="F:serine-tRNA ligase activity"/>
    <property type="evidence" value="ECO:0007669"/>
    <property type="project" value="UniProtKB-UniRule"/>
</dbReference>
<dbReference type="GO" id="GO:0016260">
    <property type="term" value="P:selenocysteine biosynthetic process"/>
    <property type="evidence" value="ECO:0007669"/>
    <property type="project" value="UniProtKB-UniRule"/>
</dbReference>
<dbReference type="GO" id="GO:0006434">
    <property type="term" value="P:seryl-tRNA aminoacylation"/>
    <property type="evidence" value="ECO:0007669"/>
    <property type="project" value="UniProtKB-UniRule"/>
</dbReference>
<dbReference type="CDD" id="cd00770">
    <property type="entry name" value="SerRS_core"/>
    <property type="match status" value="1"/>
</dbReference>
<dbReference type="FunFam" id="1.10.287.40:FF:000004">
    <property type="entry name" value="Serine--tRNA ligase"/>
    <property type="match status" value="1"/>
</dbReference>
<dbReference type="Gene3D" id="3.30.930.10">
    <property type="entry name" value="Bira Bifunctional Protein, Domain 2"/>
    <property type="match status" value="1"/>
</dbReference>
<dbReference type="Gene3D" id="1.10.287.40">
    <property type="entry name" value="Serine-tRNA synthetase, tRNA binding domain"/>
    <property type="match status" value="1"/>
</dbReference>
<dbReference type="HAMAP" id="MF_00176">
    <property type="entry name" value="Ser_tRNA_synth_type1"/>
    <property type="match status" value="1"/>
</dbReference>
<dbReference type="InterPro" id="IPR002314">
    <property type="entry name" value="aa-tRNA-synt_IIb"/>
</dbReference>
<dbReference type="InterPro" id="IPR006195">
    <property type="entry name" value="aa-tRNA-synth_II"/>
</dbReference>
<dbReference type="InterPro" id="IPR045864">
    <property type="entry name" value="aa-tRNA-synth_II/BPL/LPL"/>
</dbReference>
<dbReference type="InterPro" id="IPR002317">
    <property type="entry name" value="Ser-tRNA-ligase_type_1"/>
</dbReference>
<dbReference type="InterPro" id="IPR015866">
    <property type="entry name" value="Ser-tRNA-synth_1_N"/>
</dbReference>
<dbReference type="InterPro" id="IPR042103">
    <property type="entry name" value="SerRS_1_N_sf"/>
</dbReference>
<dbReference type="InterPro" id="IPR033729">
    <property type="entry name" value="SerRS_core"/>
</dbReference>
<dbReference type="InterPro" id="IPR010978">
    <property type="entry name" value="tRNA-bd_arm"/>
</dbReference>
<dbReference type="NCBIfam" id="TIGR00414">
    <property type="entry name" value="serS"/>
    <property type="match status" value="1"/>
</dbReference>
<dbReference type="PANTHER" id="PTHR11778">
    <property type="entry name" value="SERYL-TRNA SYNTHETASE"/>
    <property type="match status" value="1"/>
</dbReference>
<dbReference type="Pfam" id="PF02403">
    <property type="entry name" value="Seryl_tRNA_N"/>
    <property type="match status" value="1"/>
</dbReference>
<dbReference type="Pfam" id="PF00587">
    <property type="entry name" value="tRNA-synt_2b"/>
    <property type="match status" value="1"/>
</dbReference>
<dbReference type="PIRSF" id="PIRSF001529">
    <property type="entry name" value="Ser-tRNA-synth_IIa"/>
    <property type="match status" value="1"/>
</dbReference>
<dbReference type="PRINTS" id="PR00981">
    <property type="entry name" value="TRNASYNTHSER"/>
</dbReference>
<dbReference type="SUPFAM" id="SSF55681">
    <property type="entry name" value="Class II aaRS and biotin synthetases"/>
    <property type="match status" value="1"/>
</dbReference>
<dbReference type="SUPFAM" id="SSF46589">
    <property type="entry name" value="tRNA-binding arm"/>
    <property type="match status" value="1"/>
</dbReference>
<dbReference type="PROSITE" id="PS50862">
    <property type="entry name" value="AA_TRNA_LIGASE_II"/>
    <property type="match status" value="1"/>
</dbReference>
<name>SYS_MYCA9</name>
<organism>
    <name type="scientific">Mycobacteroides abscessus (strain ATCC 19977 / DSM 44196 / CCUG 20993 / CIP 104536 / JCM 13569 / NCTC 13031 / TMC 1543 / L948)</name>
    <name type="common">Mycobacterium abscessus</name>
    <dbReference type="NCBI Taxonomy" id="561007"/>
    <lineage>
        <taxon>Bacteria</taxon>
        <taxon>Bacillati</taxon>
        <taxon>Actinomycetota</taxon>
        <taxon>Actinomycetes</taxon>
        <taxon>Mycobacteriales</taxon>
        <taxon>Mycobacteriaceae</taxon>
        <taxon>Mycobacteroides</taxon>
        <taxon>Mycobacteroides abscessus</taxon>
    </lineage>
</organism>
<comment type="function">
    <text evidence="1">Catalyzes the attachment of serine to tRNA(Ser). Is also able to aminoacylate tRNA(Sec) with serine, to form the misacylated tRNA L-seryl-tRNA(Sec), which will be further converted into selenocysteinyl-tRNA(Sec).</text>
</comment>
<comment type="catalytic activity">
    <reaction evidence="1">
        <text>tRNA(Ser) + L-serine + ATP = L-seryl-tRNA(Ser) + AMP + diphosphate + H(+)</text>
        <dbReference type="Rhea" id="RHEA:12292"/>
        <dbReference type="Rhea" id="RHEA-COMP:9669"/>
        <dbReference type="Rhea" id="RHEA-COMP:9703"/>
        <dbReference type="ChEBI" id="CHEBI:15378"/>
        <dbReference type="ChEBI" id="CHEBI:30616"/>
        <dbReference type="ChEBI" id="CHEBI:33019"/>
        <dbReference type="ChEBI" id="CHEBI:33384"/>
        <dbReference type="ChEBI" id="CHEBI:78442"/>
        <dbReference type="ChEBI" id="CHEBI:78533"/>
        <dbReference type="ChEBI" id="CHEBI:456215"/>
        <dbReference type="EC" id="6.1.1.11"/>
    </reaction>
</comment>
<comment type="catalytic activity">
    <reaction evidence="1">
        <text>tRNA(Sec) + L-serine + ATP = L-seryl-tRNA(Sec) + AMP + diphosphate + H(+)</text>
        <dbReference type="Rhea" id="RHEA:42580"/>
        <dbReference type="Rhea" id="RHEA-COMP:9742"/>
        <dbReference type="Rhea" id="RHEA-COMP:10128"/>
        <dbReference type="ChEBI" id="CHEBI:15378"/>
        <dbReference type="ChEBI" id="CHEBI:30616"/>
        <dbReference type="ChEBI" id="CHEBI:33019"/>
        <dbReference type="ChEBI" id="CHEBI:33384"/>
        <dbReference type="ChEBI" id="CHEBI:78442"/>
        <dbReference type="ChEBI" id="CHEBI:78533"/>
        <dbReference type="ChEBI" id="CHEBI:456215"/>
        <dbReference type="EC" id="6.1.1.11"/>
    </reaction>
</comment>
<comment type="pathway">
    <text evidence="1">Aminoacyl-tRNA biosynthesis; selenocysteinyl-tRNA(Sec) biosynthesis; L-seryl-tRNA(Sec) from L-serine and tRNA(Sec): step 1/1.</text>
</comment>
<comment type="subunit">
    <text evidence="1">Homodimer. The tRNA molecule binds across the dimer.</text>
</comment>
<comment type="subcellular location">
    <subcellularLocation>
        <location evidence="1">Cytoplasm</location>
    </subcellularLocation>
</comment>
<comment type="domain">
    <text evidence="1">Consists of two distinct domains, a catalytic core and a N-terminal extension that is involved in tRNA binding.</text>
</comment>
<comment type="similarity">
    <text evidence="1">Belongs to the class-II aminoacyl-tRNA synthetase family. Type-1 seryl-tRNA synthetase subfamily.</text>
</comment>
<proteinExistence type="inferred from homology"/>